<comment type="function">
    <text evidence="1">Formation of pseudouridine at positions 38, 39 and 40 in the anticodon stem and loop of transfer RNAs.</text>
</comment>
<comment type="catalytic activity">
    <reaction evidence="1">
        <text>uridine(38/39/40) in tRNA = pseudouridine(38/39/40) in tRNA</text>
        <dbReference type="Rhea" id="RHEA:22376"/>
        <dbReference type="Rhea" id="RHEA-COMP:10085"/>
        <dbReference type="Rhea" id="RHEA-COMP:10087"/>
        <dbReference type="ChEBI" id="CHEBI:65314"/>
        <dbReference type="ChEBI" id="CHEBI:65315"/>
        <dbReference type="EC" id="5.4.99.12"/>
    </reaction>
</comment>
<comment type="subunit">
    <text evidence="1">Homodimer.</text>
</comment>
<comment type="similarity">
    <text evidence="1">Belongs to the tRNA pseudouridine synthase TruA family.</text>
</comment>
<reference key="1">
    <citation type="journal article" date="2008" name="PLoS Genet.">
        <title>The genome of Borrelia recurrentis, the agent of deadly louse-borne relapsing fever, is a degraded subset of tick-borne Borrelia duttonii.</title>
        <authorList>
            <person name="Lescot M."/>
            <person name="Audic S."/>
            <person name="Robert C."/>
            <person name="Nguyen T.T."/>
            <person name="Blanc G."/>
            <person name="Cutler S.J."/>
            <person name="Wincker P."/>
            <person name="Couloux A."/>
            <person name="Claverie J.-M."/>
            <person name="Raoult D."/>
            <person name="Drancourt M."/>
        </authorList>
    </citation>
    <scope>NUCLEOTIDE SEQUENCE [LARGE SCALE GENOMIC DNA]</scope>
    <source>
        <strain>Ly</strain>
    </source>
</reference>
<accession>B5RLM0</accession>
<protein>
    <recommendedName>
        <fullName evidence="1">tRNA pseudouridine synthase A</fullName>
        <ecNumber evidence="1">5.4.99.12</ecNumber>
    </recommendedName>
    <alternativeName>
        <fullName evidence="1">tRNA pseudouridine(38-40) synthase</fullName>
    </alternativeName>
    <alternativeName>
        <fullName evidence="1">tRNA pseudouridylate synthase I</fullName>
    </alternativeName>
    <alternativeName>
        <fullName evidence="1">tRNA-uridine isomerase I</fullName>
    </alternativeName>
</protein>
<name>TRUA_BORDL</name>
<dbReference type="EC" id="5.4.99.12" evidence="1"/>
<dbReference type="EMBL" id="CP000976">
    <property type="protein sequence ID" value="ACH92976.1"/>
    <property type="molecule type" value="Genomic_DNA"/>
</dbReference>
<dbReference type="RefSeq" id="WP_012537788.1">
    <property type="nucleotide sequence ID" value="NC_011229.1"/>
</dbReference>
<dbReference type="SMR" id="B5RLM0"/>
<dbReference type="STRING" id="412419.BDU_18"/>
<dbReference type="KEGG" id="bdu:BDU_18"/>
<dbReference type="eggNOG" id="COG0101">
    <property type="taxonomic scope" value="Bacteria"/>
</dbReference>
<dbReference type="HOGENOM" id="CLU_014673_0_1_12"/>
<dbReference type="OrthoDB" id="9811823at2"/>
<dbReference type="Proteomes" id="UP000000611">
    <property type="component" value="Chromosome"/>
</dbReference>
<dbReference type="GO" id="GO:0003723">
    <property type="term" value="F:RNA binding"/>
    <property type="evidence" value="ECO:0007669"/>
    <property type="project" value="InterPro"/>
</dbReference>
<dbReference type="GO" id="GO:0160147">
    <property type="term" value="F:tRNA pseudouridine(38-40) synthase activity"/>
    <property type="evidence" value="ECO:0007669"/>
    <property type="project" value="UniProtKB-EC"/>
</dbReference>
<dbReference type="GO" id="GO:0031119">
    <property type="term" value="P:tRNA pseudouridine synthesis"/>
    <property type="evidence" value="ECO:0007669"/>
    <property type="project" value="UniProtKB-UniRule"/>
</dbReference>
<dbReference type="CDD" id="cd02570">
    <property type="entry name" value="PseudoU_synth_EcTruA"/>
    <property type="match status" value="1"/>
</dbReference>
<dbReference type="FunFam" id="3.30.70.580:FF:000001">
    <property type="entry name" value="tRNA pseudouridine synthase A"/>
    <property type="match status" value="1"/>
</dbReference>
<dbReference type="Gene3D" id="3.30.70.660">
    <property type="entry name" value="Pseudouridine synthase I, catalytic domain, C-terminal subdomain"/>
    <property type="match status" value="1"/>
</dbReference>
<dbReference type="Gene3D" id="3.30.70.580">
    <property type="entry name" value="Pseudouridine synthase I, catalytic domain, N-terminal subdomain"/>
    <property type="match status" value="1"/>
</dbReference>
<dbReference type="HAMAP" id="MF_00171">
    <property type="entry name" value="TruA"/>
    <property type="match status" value="1"/>
</dbReference>
<dbReference type="InterPro" id="IPR020103">
    <property type="entry name" value="PsdUridine_synth_cat_dom_sf"/>
</dbReference>
<dbReference type="InterPro" id="IPR001406">
    <property type="entry name" value="PsdUridine_synth_TruA"/>
</dbReference>
<dbReference type="InterPro" id="IPR020097">
    <property type="entry name" value="PsdUridine_synth_TruA_a/b_dom"/>
</dbReference>
<dbReference type="InterPro" id="IPR020095">
    <property type="entry name" value="PsdUridine_synth_TruA_C"/>
</dbReference>
<dbReference type="InterPro" id="IPR020094">
    <property type="entry name" value="TruA/RsuA/RluB/E/F_N"/>
</dbReference>
<dbReference type="NCBIfam" id="TIGR00071">
    <property type="entry name" value="hisT_truA"/>
    <property type="match status" value="1"/>
</dbReference>
<dbReference type="PANTHER" id="PTHR11142">
    <property type="entry name" value="PSEUDOURIDYLATE SYNTHASE"/>
    <property type="match status" value="1"/>
</dbReference>
<dbReference type="PANTHER" id="PTHR11142:SF0">
    <property type="entry name" value="TRNA PSEUDOURIDINE SYNTHASE-LIKE 1"/>
    <property type="match status" value="1"/>
</dbReference>
<dbReference type="Pfam" id="PF01416">
    <property type="entry name" value="PseudoU_synth_1"/>
    <property type="match status" value="2"/>
</dbReference>
<dbReference type="PIRSF" id="PIRSF001430">
    <property type="entry name" value="tRNA_psdUrid_synth"/>
    <property type="match status" value="1"/>
</dbReference>
<dbReference type="SUPFAM" id="SSF55120">
    <property type="entry name" value="Pseudouridine synthase"/>
    <property type="match status" value="1"/>
</dbReference>
<sequence>MKKILAEIAYDGSLYHGFQIQPTKPTIQGEIEKALEKINKTKVKIQSAGRTDKGVHAKRQIISFYIKININLKNLKTAINSLLKNDIRIIKLKYVSNEFQPRFHAKKRKYTYYILNNENHYPWEEYQAYYVRKKLNINRLNTMAEMLIGLHDFTTFSCIRDQTNSKLKEIYLAKFKKKNKFIVFEIIGSSFLWKMVRSIVGTMIDIEIKNESVDTFIKILKSKNRKYARTTAPAKALFLDRVFYE</sequence>
<organism>
    <name type="scientific">Borrelia duttonii (strain Ly)</name>
    <dbReference type="NCBI Taxonomy" id="412419"/>
    <lineage>
        <taxon>Bacteria</taxon>
        <taxon>Pseudomonadati</taxon>
        <taxon>Spirochaetota</taxon>
        <taxon>Spirochaetia</taxon>
        <taxon>Spirochaetales</taxon>
        <taxon>Borreliaceae</taxon>
        <taxon>Borrelia</taxon>
    </lineage>
</organism>
<proteinExistence type="inferred from homology"/>
<evidence type="ECO:0000255" key="1">
    <source>
        <dbReference type="HAMAP-Rule" id="MF_00171"/>
    </source>
</evidence>
<keyword id="KW-0413">Isomerase</keyword>
<keyword id="KW-0819">tRNA processing</keyword>
<feature type="chain" id="PRO_1000097720" description="tRNA pseudouridine synthase A">
    <location>
        <begin position="1"/>
        <end position="245"/>
    </location>
</feature>
<feature type="active site" description="Nucleophile" evidence="1">
    <location>
        <position position="52"/>
    </location>
</feature>
<feature type="binding site" evidence="1">
    <location>
        <position position="110"/>
    </location>
    <ligand>
        <name>substrate</name>
    </ligand>
</feature>
<gene>
    <name evidence="1" type="primary">truA</name>
    <name type="ordered locus">BDU_18</name>
</gene>